<keyword id="KW-1185">Reference proteome</keyword>
<keyword id="KW-0687">Ribonucleoprotein</keyword>
<keyword id="KW-0689">Ribosomal protein</keyword>
<keyword id="KW-0694">RNA-binding</keyword>
<keyword id="KW-0699">rRNA-binding</keyword>
<dbReference type="EMBL" id="BA000004">
    <property type="protein sequence ID" value="BAB06857.1"/>
    <property type="molecule type" value="Genomic_DNA"/>
</dbReference>
<dbReference type="PIR" id="B84042">
    <property type="entry name" value="B84042"/>
</dbReference>
<dbReference type="RefSeq" id="WP_010899281.1">
    <property type="nucleotide sequence ID" value="NC_002570.2"/>
</dbReference>
<dbReference type="SMR" id="Q9K869"/>
<dbReference type="STRING" id="272558.gene:10729050"/>
<dbReference type="GeneID" id="87598658"/>
<dbReference type="KEGG" id="bha:BH3138"/>
<dbReference type="eggNOG" id="COG0292">
    <property type="taxonomic scope" value="Bacteria"/>
</dbReference>
<dbReference type="HOGENOM" id="CLU_123265_0_1_9"/>
<dbReference type="OrthoDB" id="9808966at2"/>
<dbReference type="Proteomes" id="UP000001258">
    <property type="component" value="Chromosome"/>
</dbReference>
<dbReference type="GO" id="GO:1990904">
    <property type="term" value="C:ribonucleoprotein complex"/>
    <property type="evidence" value="ECO:0007669"/>
    <property type="project" value="UniProtKB-KW"/>
</dbReference>
<dbReference type="GO" id="GO:0005840">
    <property type="term" value="C:ribosome"/>
    <property type="evidence" value="ECO:0007669"/>
    <property type="project" value="UniProtKB-KW"/>
</dbReference>
<dbReference type="GO" id="GO:0019843">
    <property type="term" value="F:rRNA binding"/>
    <property type="evidence" value="ECO:0007669"/>
    <property type="project" value="UniProtKB-UniRule"/>
</dbReference>
<dbReference type="GO" id="GO:0003735">
    <property type="term" value="F:structural constituent of ribosome"/>
    <property type="evidence" value="ECO:0007669"/>
    <property type="project" value="InterPro"/>
</dbReference>
<dbReference type="GO" id="GO:0000027">
    <property type="term" value="P:ribosomal large subunit assembly"/>
    <property type="evidence" value="ECO:0007669"/>
    <property type="project" value="UniProtKB-UniRule"/>
</dbReference>
<dbReference type="GO" id="GO:0006412">
    <property type="term" value="P:translation"/>
    <property type="evidence" value="ECO:0007669"/>
    <property type="project" value="InterPro"/>
</dbReference>
<dbReference type="CDD" id="cd07026">
    <property type="entry name" value="Ribosomal_L20"/>
    <property type="match status" value="1"/>
</dbReference>
<dbReference type="FunFam" id="1.10.1900.20:FF:000001">
    <property type="entry name" value="50S ribosomal protein L20"/>
    <property type="match status" value="1"/>
</dbReference>
<dbReference type="Gene3D" id="6.10.160.10">
    <property type="match status" value="1"/>
</dbReference>
<dbReference type="Gene3D" id="1.10.1900.20">
    <property type="entry name" value="Ribosomal protein L20"/>
    <property type="match status" value="1"/>
</dbReference>
<dbReference type="HAMAP" id="MF_00382">
    <property type="entry name" value="Ribosomal_bL20"/>
    <property type="match status" value="1"/>
</dbReference>
<dbReference type="InterPro" id="IPR005813">
    <property type="entry name" value="Ribosomal_bL20"/>
</dbReference>
<dbReference type="InterPro" id="IPR049946">
    <property type="entry name" value="RIBOSOMAL_L20_CS"/>
</dbReference>
<dbReference type="InterPro" id="IPR035566">
    <property type="entry name" value="Ribosomal_protein_bL20_C"/>
</dbReference>
<dbReference type="NCBIfam" id="TIGR01032">
    <property type="entry name" value="rplT_bact"/>
    <property type="match status" value="1"/>
</dbReference>
<dbReference type="PANTHER" id="PTHR10986">
    <property type="entry name" value="39S RIBOSOMAL PROTEIN L20"/>
    <property type="match status" value="1"/>
</dbReference>
<dbReference type="Pfam" id="PF00453">
    <property type="entry name" value="Ribosomal_L20"/>
    <property type="match status" value="1"/>
</dbReference>
<dbReference type="PRINTS" id="PR00062">
    <property type="entry name" value="RIBOSOMALL20"/>
</dbReference>
<dbReference type="SUPFAM" id="SSF74731">
    <property type="entry name" value="Ribosomal protein L20"/>
    <property type="match status" value="1"/>
</dbReference>
<dbReference type="PROSITE" id="PS00937">
    <property type="entry name" value="RIBOSOMAL_L20"/>
    <property type="match status" value="1"/>
</dbReference>
<reference key="1">
    <citation type="journal article" date="2000" name="Nucleic Acids Res.">
        <title>Complete genome sequence of the alkaliphilic bacterium Bacillus halodurans and genomic sequence comparison with Bacillus subtilis.</title>
        <authorList>
            <person name="Takami H."/>
            <person name="Nakasone K."/>
            <person name="Takaki Y."/>
            <person name="Maeno G."/>
            <person name="Sasaki R."/>
            <person name="Masui N."/>
            <person name="Fuji F."/>
            <person name="Hirama C."/>
            <person name="Nakamura Y."/>
            <person name="Ogasawara N."/>
            <person name="Kuhara S."/>
            <person name="Horikoshi K."/>
        </authorList>
    </citation>
    <scope>NUCLEOTIDE SEQUENCE [LARGE SCALE GENOMIC DNA]</scope>
    <source>
        <strain>ATCC BAA-125 / DSM 18197 / FERM 7344 / JCM 9153 / C-125</strain>
    </source>
</reference>
<protein>
    <recommendedName>
        <fullName evidence="1">Large ribosomal subunit protein bL20</fullName>
    </recommendedName>
    <alternativeName>
        <fullName evidence="2">50S ribosomal protein L20</fullName>
    </alternativeName>
</protein>
<gene>
    <name evidence="1" type="primary">rplT</name>
    <name type="ordered locus">BH3138</name>
</gene>
<sequence>MPRVKGGYVARRRRKKVLKLAKGYFGSKHTLFKSAQGQVMKSLQYAYRDRRQKKRDFRKLWITRINAAARLNGLSYSRLMHGLKLAGINVNRKMLADLAINDEKAFAQLAEKAKASLNN</sequence>
<organism>
    <name type="scientific">Halalkalibacterium halodurans (strain ATCC BAA-125 / DSM 18197 / FERM 7344 / JCM 9153 / C-125)</name>
    <name type="common">Bacillus halodurans</name>
    <dbReference type="NCBI Taxonomy" id="272558"/>
    <lineage>
        <taxon>Bacteria</taxon>
        <taxon>Bacillati</taxon>
        <taxon>Bacillota</taxon>
        <taxon>Bacilli</taxon>
        <taxon>Bacillales</taxon>
        <taxon>Bacillaceae</taxon>
        <taxon>Halalkalibacterium (ex Joshi et al. 2022)</taxon>
    </lineage>
</organism>
<evidence type="ECO:0000255" key="1">
    <source>
        <dbReference type="HAMAP-Rule" id="MF_00382"/>
    </source>
</evidence>
<evidence type="ECO:0000305" key="2"/>
<comment type="function">
    <text evidence="1">Binds directly to 23S ribosomal RNA and is necessary for the in vitro assembly process of the 50S ribosomal subunit. It is not involved in the protein synthesizing functions of that subunit.</text>
</comment>
<comment type="similarity">
    <text evidence="1">Belongs to the bacterial ribosomal protein bL20 family.</text>
</comment>
<accession>Q9K869</accession>
<feature type="chain" id="PRO_0000177116" description="Large ribosomal subunit protein bL20">
    <location>
        <begin position="1"/>
        <end position="119"/>
    </location>
</feature>
<proteinExistence type="inferred from homology"/>
<name>RL20_HALH5</name>